<name>TOG3C_AGEAP</name>
<proteinExistence type="evidence at protein level"/>
<sequence length="43" mass="4776">NCIDFGGDCDGEKDDCQCCXRNGYCSCYNLFGYLKRGCKXEVG</sequence>
<comment type="function">
    <text evidence="1">Omega-agatoxins are antagonists of voltage-gated calcium channels (Cav).</text>
</comment>
<comment type="subcellular location">
    <subcellularLocation>
        <location>Secreted</location>
    </subcellularLocation>
</comment>
<comment type="tissue specificity">
    <text>Expressed by the venom gland.</text>
</comment>
<comment type="domain">
    <text evidence="1">The presence of a 'disulfide through disulfide knot' structurally defines this protein as a knottin.</text>
</comment>
<comment type="similarity">
    <text evidence="2">Belongs to the neurotoxin 04 (omega-agtx) family. 03 (type II/III omega-agtx) subfamily.</text>
</comment>
<organism>
    <name type="scientific">Agelenopsis aperta</name>
    <name type="common">North American funnel-web spider</name>
    <name type="synonym">Agelenopsis gertschi</name>
    <dbReference type="NCBI Taxonomy" id="6908"/>
    <lineage>
        <taxon>Eukaryota</taxon>
        <taxon>Metazoa</taxon>
        <taxon>Ecdysozoa</taxon>
        <taxon>Arthropoda</taxon>
        <taxon>Chelicerata</taxon>
        <taxon>Arachnida</taxon>
        <taxon>Araneae</taxon>
        <taxon>Araneomorphae</taxon>
        <taxon>Entelegynae</taxon>
        <taxon>Agelenidae</taxon>
        <taxon>Agelenopsis</taxon>
    </lineage>
</organism>
<protein>
    <recommendedName>
        <fullName>Omega-agatoxin-Aa3c</fullName>
        <shortName>Omega-AGTX-Aa3c</shortName>
    </recommendedName>
    <alternativeName>
        <fullName>Omega-agatoxin IIIC</fullName>
        <shortName>Omega-Aga-IIIC</shortName>
    </alternativeName>
    <alternativeName>
        <fullName>Omega-agatoxin-3C</fullName>
    </alternativeName>
</protein>
<dbReference type="PIR" id="E54252">
    <property type="entry name" value="E54252"/>
</dbReference>
<dbReference type="ArachnoServer" id="AS000180">
    <property type="toxin name" value="omega-agatoxin-Aa3c (N-terminal fragment)"/>
</dbReference>
<dbReference type="GO" id="GO:0005576">
    <property type="term" value="C:extracellular region"/>
    <property type="evidence" value="ECO:0007669"/>
    <property type="project" value="UniProtKB-SubCell"/>
</dbReference>
<dbReference type="GO" id="GO:0044231">
    <property type="term" value="C:host cell presynaptic membrane"/>
    <property type="evidence" value="ECO:0007669"/>
    <property type="project" value="UniProtKB-KW"/>
</dbReference>
<dbReference type="GO" id="GO:0005246">
    <property type="term" value="F:calcium channel regulator activity"/>
    <property type="evidence" value="ECO:0007669"/>
    <property type="project" value="UniProtKB-KW"/>
</dbReference>
<dbReference type="GO" id="GO:0090729">
    <property type="term" value="F:toxin activity"/>
    <property type="evidence" value="ECO:0007669"/>
    <property type="project" value="UniProtKB-KW"/>
</dbReference>
<dbReference type="InterPro" id="IPR005853">
    <property type="entry name" value="Omega-agatoxin_II/III_CS"/>
</dbReference>
<dbReference type="InterPro" id="IPR013605">
    <property type="entry name" value="Toxin_34"/>
</dbReference>
<dbReference type="Pfam" id="PF08396">
    <property type="entry name" value="Toxin_34"/>
    <property type="match status" value="1"/>
</dbReference>
<dbReference type="PROSITE" id="PS60023">
    <property type="entry name" value="OMEGA_AGA_II_III"/>
    <property type="match status" value="1"/>
</dbReference>
<accession>P81745</accession>
<evidence type="ECO:0000250" key="1"/>
<evidence type="ECO:0000305" key="2"/>
<feature type="chain" id="PRO_0000087608" description="Omega-agatoxin-Aa3c">
    <location>
        <begin position="1"/>
        <end position="43" status="greater than"/>
    </location>
</feature>
<feature type="disulfide bond" evidence="2">
    <location>
        <begin position="2"/>
        <end position="19"/>
    </location>
</feature>
<feature type="disulfide bond" evidence="2">
    <location>
        <begin position="9"/>
        <end position="25"/>
    </location>
</feature>
<feature type="disulfide bond" evidence="2">
    <location>
        <begin position="27"/>
        <end position="38"/>
    </location>
</feature>
<feature type="non-terminal residue">
    <location>
        <position position="43"/>
    </location>
</feature>
<reference key="1">
    <citation type="journal article" date="1994" name="Biochemistry">
        <title>Type III omega-agatoxins: a family of probes for similar binding sites on L- and N-type calcium channels.</title>
        <authorList>
            <person name="Ertel E.A."/>
            <person name="Warren V.A."/>
            <person name="Adams M.E."/>
            <person name="Griffin P.R."/>
            <person name="Cohen C.J."/>
            <person name="Smith M.M."/>
        </authorList>
    </citation>
    <scope>PROTEIN SEQUENCE</scope>
    <source>
        <tissue>Venom</tissue>
    </source>
</reference>
<keyword id="KW-0108">Calcium channel impairing toxin</keyword>
<keyword id="KW-0903">Direct protein sequencing</keyword>
<keyword id="KW-1015">Disulfide bond</keyword>
<keyword id="KW-0872">Ion channel impairing toxin</keyword>
<keyword id="KW-0960">Knottin</keyword>
<keyword id="KW-0528">Neurotoxin</keyword>
<keyword id="KW-0638">Presynaptic neurotoxin</keyword>
<keyword id="KW-0964">Secreted</keyword>
<keyword id="KW-0800">Toxin</keyword>
<keyword id="KW-1218">Voltage-gated calcium channel impairing toxin</keyword>